<proteinExistence type="inferred from homology"/>
<protein>
    <recommendedName>
        <fullName evidence="1">NAD(P)H-quinone oxidoreductase subunit 4L, chloroplastic</fullName>
        <ecNumber evidence="1">7.1.1.-</ecNumber>
    </recommendedName>
    <alternativeName>
        <fullName evidence="1">NAD(P)H dehydrogenase subunit 4L</fullName>
    </alternativeName>
    <alternativeName>
        <fullName evidence="1">NADH-plastoquinone oxidoreductase subunit 4L</fullName>
    </alternativeName>
</protein>
<gene>
    <name evidence="1" type="primary">ndhE</name>
</gene>
<reference key="1">
    <citation type="journal article" date="2006" name="BMC Evol. Biol.">
        <title>Complete plastid genome sequences of Drimys, Liriodendron, and Piper: implications for the phylogenetic relationships of magnoliids.</title>
        <authorList>
            <person name="Cai Z."/>
            <person name="Penaflor C."/>
            <person name="Kuehl J.V."/>
            <person name="Leebens-Mack J."/>
            <person name="Carlson J.E."/>
            <person name="dePamphilis C.W."/>
            <person name="Boore J.L."/>
            <person name="Jansen R.K."/>
        </authorList>
    </citation>
    <scope>NUCLEOTIDE SEQUENCE [LARGE SCALE GENOMIC DNA]</scope>
</reference>
<comment type="function">
    <text evidence="1">NDH shuttles electrons from NAD(P)H:plastoquinone, via FMN and iron-sulfur (Fe-S) centers, to quinones in the photosynthetic chain and possibly in a chloroplast respiratory chain. The immediate electron acceptor for the enzyme in this species is believed to be plastoquinone. Couples the redox reaction to proton translocation, and thus conserves the redox energy in a proton gradient.</text>
</comment>
<comment type="catalytic activity">
    <reaction evidence="1">
        <text>a plastoquinone + NADH + (n+1) H(+)(in) = a plastoquinol + NAD(+) + n H(+)(out)</text>
        <dbReference type="Rhea" id="RHEA:42608"/>
        <dbReference type="Rhea" id="RHEA-COMP:9561"/>
        <dbReference type="Rhea" id="RHEA-COMP:9562"/>
        <dbReference type="ChEBI" id="CHEBI:15378"/>
        <dbReference type="ChEBI" id="CHEBI:17757"/>
        <dbReference type="ChEBI" id="CHEBI:57540"/>
        <dbReference type="ChEBI" id="CHEBI:57945"/>
        <dbReference type="ChEBI" id="CHEBI:62192"/>
    </reaction>
</comment>
<comment type="catalytic activity">
    <reaction evidence="1">
        <text>a plastoquinone + NADPH + (n+1) H(+)(in) = a plastoquinol + NADP(+) + n H(+)(out)</text>
        <dbReference type="Rhea" id="RHEA:42612"/>
        <dbReference type="Rhea" id="RHEA-COMP:9561"/>
        <dbReference type="Rhea" id="RHEA-COMP:9562"/>
        <dbReference type="ChEBI" id="CHEBI:15378"/>
        <dbReference type="ChEBI" id="CHEBI:17757"/>
        <dbReference type="ChEBI" id="CHEBI:57783"/>
        <dbReference type="ChEBI" id="CHEBI:58349"/>
        <dbReference type="ChEBI" id="CHEBI:62192"/>
    </reaction>
</comment>
<comment type="subunit">
    <text evidence="1">NDH is composed of at least 16 different subunits, 5 of which are encoded in the nucleus.</text>
</comment>
<comment type="subcellular location">
    <subcellularLocation>
        <location evidence="1">Plastid</location>
        <location evidence="1">Chloroplast thylakoid membrane</location>
        <topology evidence="1">Multi-pass membrane protein</topology>
    </subcellularLocation>
</comment>
<comment type="similarity">
    <text evidence="1">Belongs to the complex I subunit 4L family.</text>
</comment>
<evidence type="ECO:0000255" key="1">
    <source>
        <dbReference type="HAMAP-Rule" id="MF_01456"/>
    </source>
</evidence>
<name>NU4LC_DRIGR</name>
<feature type="chain" id="PRO_0000360327" description="NAD(P)H-quinone oxidoreductase subunit 4L, chloroplastic">
    <location>
        <begin position="1"/>
        <end position="101"/>
    </location>
</feature>
<feature type="transmembrane region" description="Helical" evidence="1">
    <location>
        <begin position="2"/>
        <end position="22"/>
    </location>
</feature>
<feature type="transmembrane region" description="Helical" evidence="1">
    <location>
        <begin position="27"/>
        <end position="46"/>
    </location>
</feature>
<feature type="transmembrane region" description="Helical" evidence="1">
    <location>
        <begin position="61"/>
        <end position="81"/>
    </location>
</feature>
<dbReference type="EC" id="7.1.1.-" evidence="1"/>
<dbReference type="EMBL" id="DQ887676">
    <property type="protein sequence ID" value="ABH88350.1"/>
    <property type="molecule type" value="Genomic_DNA"/>
</dbReference>
<dbReference type="RefSeq" id="YP_784439.1">
    <property type="nucleotide sequence ID" value="NC_008456.1"/>
</dbReference>
<dbReference type="SMR" id="Q06GU4"/>
<dbReference type="GeneID" id="4363560"/>
<dbReference type="GO" id="GO:0009535">
    <property type="term" value="C:chloroplast thylakoid membrane"/>
    <property type="evidence" value="ECO:0007669"/>
    <property type="project" value="UniProtKB-SubCell"/>
</dbReference>
<dbReference type="GO" id="GO:0030964">
    <property type="term" value="C:NADH dehydrogenase complex"/>
    <property type="evidence" value="ECO:0007669"/>
    <property type="project" value="TreeGrafter"/>
</dbReference>
<dbReference type="GO" id="GO:0016655">
    <property type="term" value="F:oxidoreductase activity, acting on NAD(P)H, quinone or similar compound as acceptor"/>
    <property type="evidence" value="ECO:0007669"/>
    <property type="project" value="UniProtKB-UniRule"/>
</dbReference>
<dbReference type="GO" id="GO:0048038">
    <property type="term" value="F:quinone binding"/>
    <property type="evidence" value="ECO:0007669"/>
    <property type="project" value="UniProtKB-KW"/>
</dbReference>
<dbReference type="GO" id="GO:0042773">
    <property type="term" value="P:ATP synthesis coupled electron transport"/>
    <property type="evidence" value="ECO:0007669"/>
    <property type="project" value="InterPro"/>
</dbReference>
<dbReference type="GO" id="GO:0019684">
    <property type="term" value="P:photosynthesis, light reaction"/>
    <property type="evidence" value="ECO:0007669"/>
    <property type="project" value="UniProtKB-UniRule"/>
</dbReference>
<dbReference type="FunFam" id="1.10.287.3510:FF:000001">
    <property type="entry name" value="NADH-quinone oxidoreductase subunit K"/>
    <property type="match status" value="1"/>
</dbReference>
<dbReference type="Gene3D" id="1.10.287.3510">
    <property type="match status" value="1"/>
</dbReference>
<dbReference type="HAMAP" id="MF_01456">
    <property type="entry name" value="NDH1_NuoK"/>
    <property type="match status" value="1"/>
</dbReference>
<dbReference type="InterPro" id="IPR001133">
    <property type="entry name" value="NADH_UbQ_OxRdtase_chain4L/K"/>
</dbReference>
<dbReference type="InterPro" id="IPR039428">
    <property type="entry name" value="NUOK/Mnh_C1-like"/>
</dbReference>
<dbReference type="NCBIfam" id="NF004320">
    <property type="entry name" value="PRK05715.1-2"/>
    <property type="match status" value="1"/>
</dbReference>
<dbReference type="PANTHER" id="PTHR11434:SF16">
    <property type="entry name" value="NADH-UBIQUINONE OXIDOREDUCTASE CHAIN 4L"/>
    <property type="match status" value="1"/>
</dbReference>
<dbReference type="PANTHER" id="PTHR11434">
    <property type="entry name" value="NADH-UBIQUINONE OXIDOREDUCTASE SUBUNIT ND4L"/>
    <property type="match status" value="1"/>
</dbReference>
<dbReference type="Pfam" id="PF00420">
    <property type="entry name" value="Oxidored_q2"/>
    <property type="match status" value="1"/>
</dbReference>
<keyword id="KW-0150">Chloroplast</keyword>
<keyword id="KW-0472">Membrane</keyword>
<keyword id="KW-0520">NAD</keyword>
<keyword id="KW-0521">NADP</keyword>
<keyword id="KW-0934">Plastid</keyword>
<keyword id="KW-0618">Plastoquinone</keyword>
<keyword id="KW-0874">Quinone</keyword>
<keyword id="KW-0793">Thylakoid</keyword>
<keyword id="KW-1278">Translocase</keyword>
<keyword id="KW-0812">Transmembrane</keyword>
<keyword id="KW-1133">Transmembrane helix</keyword>
<keyword id="KW-0813">Transport</keyword>
<geneLocation type="chloroplast"/>
<accession>Q06GU4</accession>
<organism>
    <name type="scientific">Drimys granadensis</name>
    <dbReference type="NCBI Taxonomy" id="224735"/>
    <lineage>
        <taxon>Eukaryota</taxon>
        <taxon>Viridiplantae</taxon>
        <taxon>Streptophyta</taxon>
        <taxon>Embryophyta</taxon>
        <taxon>Tracheophyta</taxon>
        <taxon>Spermatophyta</taxon>
        <taxon>Magnoliopsida</taxon>
        <taxon>Magnoliidae</taxon>
        <taxon>Canellales</taxon>
        <taxon>Winteraceae</taxon>
        <taxon>Drimys</taxon>
    </lineage>
</organism>
<sequence>MMLEHVLILSAYLFSIGIYGLITSRNMVRALMCLELILNAVNMNLIKFSDLFDSRQLKGDIFSIFVIAIAAAEAAIGPAIVSSIHRNRKSTRINQSNLLNK</sequence>